<protein>
    <recommendedName>
        <fullName>Acetolactate synthase isozyme 3 small subunit</fullName>
        <ecNumber>2.2.1.6</ecNumber>
    </recommendedName>
    <alternativeName>
        <fullName>ALS-III</fullName>
    </alternativeName>
    <alternativeName>
        <fullName>Acetohydroxy-acid synthase III small subunit</fullName>
        <shortName>AHAS-III</shortName>
    </alternativeName>
</protein>
<dbReference type="EC" id="2.2.1.6"/>
<dbReference type="EMBL" id="X01609">
    <property type="protein sequence ID" value="CAA25756.1"/>
    <property type="molecule type" value="Genomic_DNA"/>
</dbReference>
<dbReference type="EMBL" id="X55457">
    <property type="status" value="NOT_ANNOTATED_CDS"/>
    <property type="molecule type" value="Genomic_DNA"/>
</dbReference>
<dbReference type="EMBL" id="X55034">
    <property type="protein sequence ID" value="CAA38855.1"/>
    <property type="molecule type" value="Genomic_DNA"/>
</dbReference>
<dbReference type="EMBL" id="U00096">
    <property type="protein sequence ID" value="AAC73189.1"/>
    <property type="molecule type" value="Genomic_DNA"/>
</dbReference>
<dbReference type="EMBL" id="AP009048">
    <property type="protein sequence ID" value="BAB96647.2"/>
    <property type="molecule type" value="Genomic_DNA"/>
</dbReference>
<dbReference type="EMBL" id="M35034">
    <property type="protein sequence ID" value="AAA24627.1"/>
    <property type="molecule type" value="Genomic_DNA"/>
</dbReference>
<dbReference type="PIR" id="F64729">
    <property type="entry name" value="YCEC3H"/>
</dbReference>
<dbReference type="RefSeq" id="NP_414620.1">
    <property type="nucleotide sequence ID" value="NC_000913.3"/>
</dbReference>
<dbReference type="PDB" id="2F1F">
    <property type="method" value="X-ray"/>
    <property type="resolution" value="1.75 A"/>
    <property type="chains" value="A/B=1-163"/>
</dbReference>
<dbReference type="PDBsum" id="2F1F"/>
<dbReference type="SMR" id="P00894"/>
<dbReference type="BioGRID" id="4259381">
    <property type="interactions" value="5"/>
</dbReference>
<dbReference type="BioGRID" id="851597">
    <property type="interactions" value="2"/>
</dbReference>
<dbReference type="ComplexPortal" id="CPX-3575">
    <property type="entry name" value="Acetolactate synthase III complex"/>
</dbReference>
<dbReference type="DIP" id="DIP-10024N"/>
<dbReference type="FunCoup" id="P00894">
    <property type="interactions" value="701"/>
</dbReference>
<dbReference type="IntAct" id="P00894">
    <property type="interactions" value="2"/>
</dbReference>
<dbReference type="STRING" id="511145.b0078"/>
<dbReference type="jPOST" id="P00894"/>
<dbReference type="PaxDb" id="511145-b0078"/>
<dbReference type="EnsemblBacteria" id="AAC73189">
    <property type="protein sequence ID" value="AAC73189"/>
    <property type="gene ID" value="b0078"/>
</dbReference>
<dbReference type="GeneID" id="947267"/>
<dbReference type="KEGG" id="ecj:JW0077"/>
<dbReference type="KEGG" id="eco:b0078"/>
<dbReference type="PATRIC" id="fig|1411691.4.peg.2202"/>
<dbReference type="EchoBASE" id="EB0494"/>
<dbReference type="eggNOG" id="COG0440">
    <property type="taxonomic scope" value="Bacteria"/>
</dbReference>
<dbReference type="HOGENOM" id="CLU_055003_1_3_6"/>
<dbReference type="InParanoid" id="P00894"/>
<dbReference type="OMA" id="RPFGIKE"/>
<dbReference type="OrthoDB" id="9787365at2"/>
<dbReference type="PhylomeDB" id="P00894"/>
<dbReference type="BioCyc" id="EcoCyc:ACETOLACTSYNIII-HCHAIN-MONOMER"/>
<dbReference type="BioCyc" id="MetaCyc:ACETOLACTSYNIII-HCHAIN-MONOMER"/>
<dbReference type="BRENDA" id="2.2.1.6">
    <property type="organism ID" value="2026"/>
</dbReference>
<dbReference type="UniPathway" id="UPA00047">
    <property type="reaction ID" value="UER00055"/>
</dbReference>
<dbReference type="UniPathway" id="UPA00049">
    <property type="reaction ID" value="UER00059"/>
</dbReference>
<dbReference type="EvolutionaryTrace" id="P00894"/>
<dbReference type="PRO" id="PR:P00894"/>
<dbReference type="Proteomes" id="UP000000625">
    <property type="component" value="Chromosome"/>
</dbReference>
<dbReference type="GO" id="GO:0005948">
    <property type="term" value="C:acetolactate synthase complex"/>
    <property type="evidence" value="ECO:0000353"/>
    <property type="project" value="ComplexPortal"/>
</dbReference>
<dbReference type="GO" id="GO:0005829">
    <property type="term" value="C:cytosol"/>
    <property type="evidence" value="ECO:0000314"/>
    <property type="project" value="EcoCyc"/>
</dbReference>
<dbReference type="GO" id="GO:0003984">
    <property type="term" value="F:acetolactate synthase activity"/>
    <property type="evidence" value="ECO:0000314"/>
    <property type="project" value="EcoCyc"/>
</dbReference>
<dbReference type="GO" id="GO:1990610">
    <property type="term" value="F:acetolactate synthase regulator activity"/>
    <property type="evidence" value="ECO:0007669"/>
    <property type="project" value="InterPro"/>
</dbReference>
<dbReference type="GO" id="GO:0009082">
    <property type="term" value="P:branched-chain amino acid biosynthetic process"/>
    <property type="evidence" value="ECO:0000314"/>
    <property type="project" value="ComplexPortal"/>
</dbReference>
<dbReference type="GO" id="GO:0009097">
    <property type="term" value="P:isoleucine biosynthetic process"/>
    <property type="evidence" value="ECO:0000314"/>
    <property type="project" value="EcoCyc"/>
</dbReference>
<dbReference type="GO" id="GO:0009099">
    <property type="term" value="P:L-valine biosynthetic process"/>
    <property type="evidence" value="ECO:0000314"/>
    <property type="project" value="EcoCyc"/>
</dbReference>
<dbReference type="CDD" id="cd04878">
    <property type="entry name" value="ACT_AHAS"/>
    <property type="match status" value="1"/>
</dbReference>
<dbReference type="FunFam" id="3.30.70.1150:FF:000001">
    <property type="entry name" value="Acetolactate synthase small subunit"/>
    <property type="match status" value="1"/>
</dbReference>
<dbReference type="FunFam" id="3.30.70.260:FF:000001">
    <property type="entry name" value="Acetolactate synthase, small subunit"/>
    <property type="match status" value="1"/>
</dbReference>
<dbReference type="Gene3D" id="3.30.70.260">
    <property type="match status" value="1"/>
</dbReference>
<dbReference type="Gene3D" id="3.30.70.1150">
    <property type="entry name" value="ACT-like. Chain A, domain 2"/>
    <property type="match status" value="1"/>
</dbReference>
<dbReference type="InterPro" id="IPR004789">
    <property type="entry name" value="Acetalactate_synth_ssu"/>
</dbReference>
<dbReference type="InterPro" id="IPR027271">
    <property type="entry name" value="Acetolactate_synth/TF_NikR_C"/>
</dbReference>
<dbReference type="InterPro" id="IPR019455">
    <property type="entry name" value="Acetolactate_synth_ssu_C"/>
</dbReference>
<dbReference type="InterPro" id="IPR045865">
    <property type="entry name" value="ACT-like_dom_sf"/>
</dbReference>
<dbReference type="InterPro" id="IPR002912">
    <property type="entry name" value="ACT_dom"/>
</dbReference>
<dbReference type="InterPro" id="IPR039557">
    <property type="entry name" value="AHAS_ACT"/>
</dbReference>
<dbReference type="InterPro" id="IPR054480">
    <property type="entry name" value="AHAS_small-like_ACT"/>
</dbReference>
<dbReference type="NCBIfam" id="TIGR00119">
    <property type="entry name" value="acolac_sm"/>
    <property type="match status" value="1"/>
</dbReference>
<dbReference type="NCBIfam" id="NF008864">
    <property type="entry name" value="PRK11895.1"/>
    <property type="match status" value="1"/>
</dbReference>
<dbReference type="PANTHER" id="PTHR30239">
    <property type="entry name" value="ACETOLACTATE SYNTHASE SMALL SUBUNIT"/>
    <property type="match status" value="1"/>
</dbReference>
<dbReference type="PANTHER" id="PTHR30239:SF0">
    <property type="entry name" value="ACETOLACTATE SYNTHASE SMALL SUBUNIT 1, CHLOROPLASTIC"/>
    <property type="match status" value="1"/>
</dbReference>
<dbReference type="Pfam" id="PF22629">
    <property type="entry name" value="ACT_AHAS_ss"/>
    <property type="match status" value="1"/>
</dbReference>
<dbReference type="Pfam" id="PF10369">
    <property type="entry name" value="ALS_ss_C"/>
    <property type="match status" value="1"/>
</dbReference>
<dbReference type="SUPFAM" id="SSF55021">
    <property type="entry name" value="ACT-like"/>
    <property type="match status" value="2"/>
</dbReference>
<dbReference type="PROSITE" id="PS51671">
    <property type="entry name" value="ACT"/>
    <property type="match status" value="1"/>
</dbReference>
<name>ILVH_ECOLI</name>
<keyword id="KW-0002">3D-structure</keyword>
<keyword id="KW-0028">Amino-acid biosynthesis</keyword>
<keyword id="KW-0100">Branched-chain amino acid biosynthesis</keyword>
<keyword id="KW-1185">Reference proteome</keyword>
<keyword id="KW-0808">Transferase</keyword>
<proteinExistence type="evidence at protein level"/>
<feature type="chain" id="PRO_0000151410" description="Acetolactate synthase isozyme 3 small subunit">
    <location>
        <begin position="1"/>
        <end position="163"/>
    </location>
</feature>
<feature type="domain" description="ACT" evidence="1">
    <location>
        <begin position="4"/>
        <end position="78"/>
    </location>
</feature>
<feature type="sequence conflict" description="In Ref. 1, 2 and 5." evidence="2" ref="1 2 5">
    <original>D</original>
    <variation>S</variation>
    <location>
        <position position="132"/>
    </location>
</feature>
<feature type="sequence conflict" description="In Ref. 1; CAA25756." evidence="2" ref="1">
    <original>DKIMR</original>
    <variation>VK</variation>
    <location>
        <begin position="159"/>
        <end position="163"/>
    </location>
</feature>
<feature type="strand" evidence="3">
    <location>
        <begin position="2"/>
        <end position="10"/>
    </location>
</feature>
<feature type="helix" evidence="3">
    <location>
        <begin position="15"/>
        <end position="24"/>
    </location>
</feature>
<feature type="turn" evidence="3">
    <location>
        <begin position="25"/>
        <end position="27"/>
    </location>
</feature>
<feature type="strand" evidence="3">
    <location>
        <begin position="31"/>
        <end position="37"/>
    </location>
</feature>
<feature type="strand" evidence="3">
    <location>
        <begin position="41"/>
        <end position="52"/>
    </location>
</feature>
<feature type="helix" evidence="3">
    <location>
        <begin position="54"/>
        <end position="66"/>
    </location>
</feature>
<feature type="strand" evidence="3">
    <location>
        <begin position="70"/>
        <end position="75"/>
    </location>
</feature>
<feature type="helix" evidence="3">
    <location>
        <begin position="76"/>
        <end position="78"/>
    </location>
</feature>
<feature type="strand" evidence="3">
    <location>
        <begin position="81"/>
        <end position="92"/>
    </location>
</feature>
<feature type="helix" evidence="3">
    <location>
        <begin position="96"/>
        <end position="107"/>
    </location>
</feature>
<feature type="strand" evidence="3">
    <location>
        <begin position="111"/>
        <end position="115"/>
    </location>
</feature>
<feature type="strand" evidence="3">
    <location>
        <begin position="117"/>
        <end position="126"/>
    </location>
</feature>
<feature type="helix" evidence="3">
    <location>
        <begin position="128"/>
        <end position="138"/>
    </location>
</feature>
<feature type="turn" evidence="3">
    <location>
        <begin position="139"/>
        <end position="141"/>
    </location>
</feature>
<feature type="strand" evidence="3">
    <location>
        <begin position="142"/>
        <end position="149"/>
    </location>
</feature>
<feature type="strand" evidence="3">
    <location>
        <begin position="153"/>
        <end position="157"/>
    </location>
</feature>
<gene>
    <name type="primary">ilvH</name>
    <name type="synonym">brnP</name>
    <name type="ordered locus">b0078</name>
    <name type="ordered locus">JW0077</name>
</gene>
<evidence type="ECO:0000255" key="1">
    <source>
        <dbReference type="PROSITE-ProRule" id="PRU01007"/>
    </source>
</evidence>
<evidence type="ECO:0000305" key="2"/>
<evidence type="ECO:0007829" key="3">
    <source>
        <dbReference type="PDB" id="2F1F"/>
    </source>
</evidence>
<sequence>MRRILSVLLENESGALSRVIGLFSQRGYNIESLTVAPTDDPTLSRMTIQTVGDEKVLEQIEKQLHKLVDVLRVSELGQGAHVEREIMLVKIQASGYGRDEVKRNTEIFRGQIIDVTPSLYTVQLAGTSGKLDAFLASIRDVAKIVEVARSGVVGLSRGDKIMR</sequence>
<comment type="catalytic activity">
    <reaction>
        <text>2 pyruvate + H(+) = (2S)-2-acetolactate + CO2</text>
        <dbReference type="Rhea" id="RHEA:25249"/>
        <dbReference type="ChEBI" id="CHEBI:15361"/>
        <dbReference type="ChEBI" id="CHEBI:15378"/>
        <dbReference type="ChEBI" id="CHEBI:16526"/>
        <dbReference type="ChEBI" id="CHEBI:58476"/>
        <dbReference type="EC" id="2.2.1.6"/>
    </reaction>
</comment>
<comment type="activity regulation">
    <text>Sensitive to valine inhibition.</text>
</comment>
<comment type="pathway">
    <text>Amino-acid biosynthesis; L-isoleucine biosynthesis; L-isoleucine from 2-oxobutanoate: step 1/4.</text>
</comment>
<comment type="pathway">
    <text>Amino-acid biosynthesis; L-valine biosynthesis; L-valine from pyruvate: step 1/4.</text>
</comment>
<comment type="subunit">
    <text>Dimer of large and small chains.</text>
</comment>
<comment type="miscellaneous">
    <text>E.coli contains genes for 3 AHAS isozymes: ilvBN, ilvGM and ilvIH.</text>
</comment>
<comment type="similarity">
    <text evidence="2">Belongs to the acetolactate synthase small subunit family.</text>
</comment>
<organism>
    <name type="scientific">Escherichia coli (strain K12)</name>
    <dbReference type="NCBI Taxonomy" id="83333"/>
    <lineage>
        <taxon>Bacteria</taxon>
        <taxon>Pseudomonadati</taxon>
        <taxon>Pseudomonadota</taxon>
        <taxon>Gammaproteobacteria</taxon>
        <taxon>Enterobacterales</taxon>
        <taxon>Enterobacteriaceae</taxon>
        <taxon>Escherichia</taxon>
    </lineage>
</organism>
<reference key="1">
    <citation type="journal article" date="1983" name="Nucleic Acids Res.">
        <title>Molecular structure of ilvIH and its evolutionary relationship to ilvG in Escherichia coli K12.</title>
        <authorList>
            <person name="Squires C.H."/>
            <person name="Defelice M."/>
            <person name="Devereux J."/>
            <person name="Calvo J.M."/>
        </authorList>
    </citation>
    <scope>NUCLEOTIDE SEQUENCE [GENOMIC DNA]</scope>
</reference>
<reference key="2">
    <citation type="journal article" date="1992" name="Nucleic Acids Res.">
        <title>Systematic sequencing of the Escherichia coli genome: analysis of the 0-2.4 min region.</title>
        <authorList>
            <person name="Yura T."/>
            <person name="Mori H."/>
            <person name="Nagai H."/>
            <person name="Nagata T."/>
            <person name="Ishihama A."/>
            <person name="Fujita N."/>
            <person name="Isono K."/>
            <person name="Mizobuchi K."/>
            <person name="Nakata A."/>
        </authorList>
    </citation>
    <scope>NUCLEOTIDE SEQUENCE [LARGE SCALE GENOMIC DNA]</scope>
    <source>
        <strain>K12</strain>
    </source>
</reference>
<reference key="3">
    <citation type="journal article" date="1997" name="Science">
        <title>The complete genome sequence of Escherichia coli K-12.</title>
        <authorList>
            <person name="Blattner F.R."/>
            <person name="Plunkett G. III"/>
            <person name="Bloch C.A."/>
            <person name="Perna N.T."/>
            <person name="Burland V."/>
            <person name="Riley M."/>
            <person name="Collado-Vides J."/>
            <person name="Glasner J.D."/>
            <person name="Rode C.K."/>
            <person name="Mayhew G.F."/>
            <person name="Gregor J."/>
            <person name="Davis N.W."/>
            <person name="Kirkpatrick H.A."/>
            <person name="Goeden M.A."/>
            <person name="Rose D.J."/>
            <person name="Mau B."/>
            <person name="Shao Y."/>
        </authorList>
    </citation>
    <scope>NUCLEOTIDE SEQUENCE [LARGE SCALE GENOMIC DNA]</scope>
    <source>
        <strain>K12 / MG1655 / ATCC 47076</strain>
    </source>
</reference>
<reference key="4">
    <citation type="journal article" date="2006" name="Mol. Syst. Biol.">
        <title>Highly accurate genome sequences of Escherichia coli K-12 strains MG1655 and W3110.</title>
        <authorList>
            <person name="Hayashi K."/>
            <person name="Morooka N."/>
            <person name="Yamamoto Y."/>
            <person name="Fujita K."/>
            <person name="Isono K."/>
            <person name="Choi S."/>
            <person name="Ohtsubo E."/>
            <person name="Baba T."/>
            <person name="Wanner B.L."/>
            <person name="Mori H."/>
            <person name="Horiuchi T."/>
        </authorList>
    </citation>
    <scope>NUCLEOTIDE SEQUENCE [LARGE SCALE GENOMIC DNA]</scope>
    <scope>SEQUENCE REVISION TO 132</scope>
    <source>
        <strain>K12 / W3110 / ATCC 27325 / DSM 5911</strain>
    </source>
</reference>
<reference key="5">
    <citation type="journal article" date="1991" name="Mol. Gen. Genet.">
        <title>Nucleotide sequence of the ilvH-fruR gene region of Escherichia coli K12 and Salmonella typhimurium LT2.</title>
        <authorList>
            <person name="Jahreis K."/>
            <person name="Postma P.W."/>
            <person name="Lengeler J.W."/>
        </authorList>
    </citation>
    <scope>NUCLEOTIDE SEQUENCE [GENOMIC DNA] OF 130-163</scope>
    <source>
        <strain>K12</strain>
    </source>
</reference>
<reference key="6">
    <citation type="journal article" date="1990" name="J. Bacteriol.">
        <title>Molecular cloning, nucleotide sequence, and expression of shl, a new gene in the 2-minute region of the genetic map of Escherichia coli.</title>
        <authorList>
            <person name="Leclerc G."/>
            <person name="Noel G."/>
            <person name="Drapeau G.R."/>
        </authorList>
    </citation>
    <scope>NUCLEOTIDE SEQUENCE [GENOMIC DNA] OF 130-163</scope>
</reference>
<accession>P00894</accession>
<accession>P78046</accession>
<accession>Q47637</accession>